<protein>
    <recommendedName>
        <fullName evidence="1">HPr kinase/phosphorylase</fullName>
        <shortName evidence="1">HPrK/P</shortName>
        <ecNumber evidence="1">2.7.11.-</ecNumber>
        <ecNumber evidence="1">2.7.4.-</ecNumber>
    </recommendedName>
    <alternativeName>
        <fullName evidence="1">HPr(Ser) kinase/phosphorylase</fullName>
    </alternativeName>
</protein>
<proteinExistence type="inferred from homology"/>
<name>HPRK_EXIS2</name>
<dbReference type="EC" id="2.7.11.-" evidence="1"/>
<dbReference type="EC" id="2.7.4.-" evidence="1"/>
<dbReference type="EMBL" id="CP001022">
    <property type="protein sequence ID" value="ACB61862.1"/>
    <property type="molecule type" value="Genomic_DNA"/>
</dbReference>
<dbReference type="RefSeq" id="WP_012371278.1">
    <property type="nucleotide sequence ID" value="NC_010556.1"/>
</dbReference>
<dbReference type="SMR" id="B1YLF7"/>
<dbReference type="STRING" id="262543.Exig_2412"/>
<dbReference type="KEGG" id="esi:Exig_2412"/>
<dbReference type="eggNOG" id="COG1493">
    <property type="taxonomic scope" value="Bacteria"/>
</dbReference>
<dbReference type="HOGENOM" id="CLU_052030_0_1_9"/>
<dbReference type="OrthoDB" id="9778803at2"/>
<dbReference type="Proteomes" id="UP000001681">
    <property type="component" value="Chromosome"/>
</dbReference>
<dbReference type="GO" id="GO:0005524">
    <property type="term" value="F:ATP binding"/>
    <property type="evidence" value="ECO:0007669"/>
    <property type="project" value="UniProtKB-UniRule"/>
</dbReference>
<dbReference type="GO" id="GO:0000287">
    <property type="term" value="F:magnesium ion binding"/>
    <property type="evidence" value="ECO:0007669"/>
    <property type="project" value="UniProtKB-UniRule"/>
</dbReference>
<dbReference type="GO" id="GO:0000155">
    <property type="term" value="F:phosphorelay sensor kinase activity"/>
    <property type="evidence" value="ECO:0007669"/>
    <property type="project" value="InterPro"/>
</dbReference>
<dbReference type="GO" id="GO:0004674">
    <property type="term" value="F:protein serine/threonine kinase activity"/>
    <property type="evidence" value="ECO:0007669"/>
    <property type="project" value="UniProtKB-KW"/>
</dbReference>
<dbReference type="GO" id="GO:0004712">
    <property type="term" value="F:protein serine/threonine/tyrosine kinase activity"/>
    <property type="evidence" value="ECO:0007669"/>
    <property type="project" value="UniProtKB-UniRule"/>
</dbReference>
<dbReference type="GO" id="GO:0006109">
    <property type="term" value="P:regulation of carbohydrate metabolic process"/>
    <property type="evidence" value="ECO:0007669"/>
    <property type="project" value="UniProtKB-UniRule"/>
</dbReference>
<dbReference type="CDD" id="cd01918">
    <property type="entry name" value="HprK_C"/>
    <property type="match status" value="1"/>
</dbReference>
<dbReference type="FunFam" id="3.40.50.300:FF:000174">
    <property type="entry name" value="HPr kinase/phosphorylase"/>
    <property type="match status" value="1"/>
</dbReference>
<dbReference type="Gene3D" id="3.40.1390.20">
    <property type="entry name" value="HprK N-terminal domain-like"/>
    <property type="match status" value="1"/>
</dbReference>
<dbReference type="Gene3D" id="3.40.50.300">
    <property type="entry name" value="P-loop containing nucleotide triphosphate hydrolases"/>
    <property type="match status" value="1"/>
</dbReference>
<dbReference type="HAMAP" id="MF_01249">
    <property type="entry name" value="HPr_kinase"/>
    <property type="match status" value="1"/>
</dbReference>
<dbReference type="InterPro" id="IPR003755">
    <property type="entry name" value="HPr(Ser)_kin/Pase"/>
</dbReference>
<dbReference type="InterPro" id="IPR011104">
    <property type="entry name" value="Hpr_kin/Pase_C"/>
</dbReference>
<dbReference type="InterPro" id="IPR011126">
    <property type="entry name" value="Hpr_kin/Pase_Hpr_N"/>
</dbReference>
<dbReference type="InterPro" id="IPR027417">
    <property type="entry name" value="P-loop_NTPase"/>
</dbReference>
<dbReference type="InterPro" id="IPR028979">
    <property type="entry name" value="Ser_kin/Pase_Hpr-like_N_sf"/>
</dbReference>
<dbReference type="NCBIfam" id="TIGR00679">
    <property type="entry name" value="hpr-ser"/>
    <property type="match status" value="1"/>
</dbReference>
<dbReference type="PANTHER" id="PTHR30305:SF1">
    <property type="entry name" value="HPR KINASE_PHOSPHORYLASE"/>
    <property type="match status" value="1"/>
</dbReference>
<dbReference type="PANTHER" id="PTHR30305">
    <property type="entry name" value="PROTEIN YJDM-RELATED"/>
    <property type="match status" value="1"/>
</dbReference>
<dbReference type="Pfam" id="PF07475">
    <property type="entry name" value="Hpr_kinase_C"/>
    <property type="match status" value="1"/>
</dbReference>
<dbReference type="Pfam" id="PF02603">
    <property type="entry name" value="Hpr_kinase_N"/>
    <property type="match status" value="1"/>
</dbReference>
<dbReference type="SUPFAM" id="SSF75138">
    <property type="entry name" value="HprK N-terminal domain-like"/>
    <property type="match status" value="1"/>
</dbReference>
<dbReference type="SUPFAM" id="SSF53795">
    <property type="entry name" value="PEP carboxykinase-like"/>
    <property type="match status" value="1"/>
</dbReference>
<comment type="function">
    <text evidence="1">Catalyzes the ATP- as well as the pyrophosphate-dependent phosphorylation of a specific serine residue in HPr, a phosphocarrier protein of the phosphoenolpyruvate-dependent sugar phosphotransferase system (PTS). HprK/P also catalyzes the pyrophosphate-producing, inorganic phosphate-dependent dephosphorylation (phosphorolysis) of seryl-phosphorylated HPr (P-Ser-HPr). The two antagonistic activities of HprK/P are regulated by several intracellular metabolites, which change their concentration in response to the absence or presence of rapidly metabolisable carbon sources (glucose, fructose, etc.) in the growth medium. Therefore, by controlling the phosphorylation state of HPr, HPrK/P is a sensor enzyme that plays a major role in the regulation of carbon metabolism and sugar transport: it mediates carbon catabolite repression (CCR), and regulates PTS-catalyzed carbohydrate uptake and inducer exclusion.</text>
</comment>
<comment type="catalytic activity">
    <reaction evidence="1">
        <text>[HPr protein]-L-serine + ATP = [HPr protein]-O-phospho-L-serine + ADP + H(+)</text>
        <dbReference type="Rhea" id="RHEA:46600"/>
        <dbReference type="Rhea" id="RHEA-COMP:11602"/>
        <dbReference type="Rhea" id="RHEA-COMP:11603"/>
        <dbReference type="ChEBI" id="CHEBI:15378"/>
        <dbReference type="ChEBI" id="CHEBI:29999"/>
        <dbReference type="ChEBI" id="CHEBI:30616"/>
        <dbReference type="ChEBI" id="CHEBI:83421"/>
        <dbReference type="ChEBI" id="CHEBI:456216"/>
    </reaction>
</comment>
<comment type="catalytic activity">
    <reaction evidence="1">
        <text>[HPr protein]-O-phospho-L-serine + phosphate + H(+) = [HPr protein]-L-serine + diphosphate</text>
        <dbReference type="Rhea" id="RHEA:46604"/>
        <dbReference type="Rhea" id="RHEA-COMP:11602"/>
        <dbReference type="Rhea" id="RHEA-COMP:11603"/>
        <dbReference type="ChEBI" id="CHEBI:15378"/>
        <dbReference type="ChEBI" id="CHEBI:29999"/>
        <dbReference type="ChEBI" id="CHEBI:33019"/>
        <dbReference type="ChEBI" id="CHEBI:43474"/>
        <dbReference type="ChEBI" id="CHEBI:83421"/>
    </reaction>
</comment>
<comment type="cofactor">
    <cofactor evidence="1">
        <name>Mg(2+)</name>
        <dbReference type="ChEBI" id="CHEBI:18420"/>
    </cofactor>
</comment>
<comment type="subunit">
    <text evidence="1">Homohexamer.</text>
</comment>
<comment type="domain">
    <text evidence="1">The Walker A ATP-binding motif also binds Pi and PPi.</text>
</comment>
<comment type="miscellaneous">
    <text evidence="1">Both phosphorylation and phosphorolysis are carried out by the same active site and suggest a common mechanism for both reactions.</text>
</comment>
<comment type="similarity">
    <text evidence="1">Belongs to the HPrK/P family.</text>
</comment>
<gene>
    <name evidence="1" type="primary">hprK</name>
    <name type="ordered locus">Exig_2412</name>
</gene>
<sequence>MQPKVRTAEIVKQFNLKIVTGEEGLHRPILTADLCRPGLVLAGYYAYYPAERLQILGKTELTFFNNLTYEEQLERANVLCTDETPGILITRGFDVPEAIVKAADETNVPLLTTKGHTTSVESQITNFLEAELAPTTAMHGVLVDIYGVGVFIKGASGVGKSETALELVKRGHRLVADDSVEIRQTGDGILVGTAPKLIQHLLEIRGIGIIDVMTLFGAGAVRSHKKISLVCNLEIWDQAKVYDRVGLDQETLQIIDTEIPFLTIPVRPGRNLAVIIEVAAMNYRLKNMGINTAEEFAGRLAQAIEDGNGGL</sequence>
<organism>
    <name type="scientific">Exiguobacterium sibiricum (strain DSM 17290 / CCUG 55495 / CIP 109462 / JCM 13490 / 255-15)</name>
    <dbReference type="NCBI Taxonomy" id="262543"/>
    <lineage>
        <taxon>Bacteria</taxon>
        <taxon>Bacillati</taxon>
        <taxon>Bacillota</taxon>
        <taxon>Bacilli</taxon>
        <taxon>Bacillales</taxon>
        <taxon>Bacillales Family XII. Incertae Sedis</taxon>
        <taxon>Exiguobacterium</taxon>
    </lineage>
</organism>
<evidence type="ECO:0000255" key="1">
    <source>
        <dbReference type="HAMAP-Rule" id="MF_01249"/>
    </source>
</evidence>
<keyword id="KW-0067">ATP-binding</keyword>
<keyword id="KW-0119">Carbohydrate metabolism</keyword>
<keyword id="KW-0418">Kinase</keyword>
<keyword id="KW-0460">Magnesium</keyword>
<keyword id="KW-0479">Metal-binding</keyword>
<keyword id="KW-0511">Multifunctional enzyme</keyword>
<keyword id="KW-0547">Nucleotide-binding</keyword>
<keyword id="KW-1185">Reference proteome</keyword>
<keyword id="KW-0723">Serine/threonine-protein kinase</keyword>
<keyword id="KW-0808">Transferase</keyword>
<feature type="chain" id="PRO_1000214107" description="HPr kinase/phosphorylase">
    <location>
        <begin position="1"/>
        <end position="311"/>
    </location>
</feature>
<feature type="region of interest" description="Important for the catalytic mechanism of both phosphorylation and dephosphorylation" evidence="1">
    <location>
        <begin position="202"/>
        <end position="211"/>
    </location>
</feature>
<feature type="region of interest" description="Important for the catalytic mechanism of dephosphorylation" evidence="1">
    <location>
        <begin position="265"/>
        <end position="270"/>
    </location>
</feature>
<feature type="active site" evidence="1">
    <location>
        <position position="139"/>
    </location>
</feature>
<feature type="active site" evidence="1">
    <location>
        <position position="160"/>
    </location>
</feature>
<feature type="active site" description="Proton acceptor; for phosphorylation activity. Proton donor; for dephosphorylation activity" evidence="1">
    <location>
        <position position="178"/>
    </location>
</feature>
<feature type="active site" evidence="1">
    <location>
        <position position="244"/>
    </location>
</feature>
<feature type="binding site" evidence="1">
    <location>
        <begin position="154"/>
        <end position="161"/>
    </location>
    <ligand>
        <name>ATP</name>
        <dbReference type="ChEBI" id="CHEBI:30616"/>
    </ligand>
</feature>
<feature type="binding site" evidence="1">
    <location>
        <position position="161"/>
    </location>
    <ligand>
        <name>Mg(2+)</name>
        <dbReference type="ChEBI" id="CHEBI:18420"/>
    </ligand>
</feature>
<feature type="binding site" evidence="1">
    <location>
        <position position="203"/>
    </location>
    <ligand>
        <name>Mg(2+)</name>
        <dbReference type="ChEBI" id="CHEBI:18420"/>
    </ligand>
</feature>
<accession>B1YLF7</accession>
<reference key="1">
    <citation type="submission" date="2008-04" db="EMBL/GenBank/DDBJ databases">
        <title>Complete sequence of chromosome of Exiguobacterium sibiricum 255-15.</title>
        <authorList>
            <consortium name="US DOE Joint Genome Institute"/>
            <person name="Copeland A."/>
            <person name="Lucas S."/>
            <person name="Lapidus A."/>
            <person name="Glavina del Rio T."/>
            <person name="Dalin E."/>
            <person name="Tice H."/>
            <person name="Bruce D."/>
            <person name="Goodwin L."/>
            <person name="Pitluck S."/>
            <person name="Kiss H."/>
            <person name="Chertkov O."/>
            <person name="Monk C."/>
            <person name="Brettin T."/>
            <person name="Detter J.C."/>
            <person name="Han C."/>
            <person name="Kuske C.R."/>
            <person name="Schmutz J."/>
            <person name="Larimer F."/>
            <person name="Land M."/>
            <person name="Hauser L."/>
            <person name="Kyrpides N."/>
            <person name="Mikhailova N."/>
            <person name="Vishnivetskaya T."/>
            <person name="Rodrigues D.F."/>
            <person name="Gilichinsky D."/>
            <person name="Tiedje J."/>
            <person name="Richardson P."/>
        </authorList>
    </citation>
    <scope>NUCLEOTIDE SEQUENCE [LARGE SCALE GENOMIC DNA]</scope>
    <source>
        <strain>DSM 17290 / CCUG 55495 / CIP 109462 / JCM 13490 / 255-15</strain>
    </source>
</reference>